<protein>
    <recommendedName>
        <fullName>Virion membrane protein A13 homolog</fullName>
    </recommendedName>
</protein>
<dbReference type="EMBL" id="AF198100">
    <property type="protein sequence ID" value="AAF44522.1"/>
    <property type="molecule type" value="Genomic_DNA"/>
</dbReference>
<dbReference type="RefSeq" id="NP_039141.1">
    <property type="nucleotide sequence ID" value="NC_002188.1"/>
</dbReference>
<dbReference type="SMR" id="Q9J555"/>
<dbReference type="GeneID" id="1486726"/>
<dbReference type="KEGG" id="vg:1486726"/>
<dbReference type="Proteomes" id="UP000008597">
    <property type="component" value="Segment"/>
</dbReference>
<dbReference type="GO" id="GO:0016020">
    <property type="term" value="C:membrane"/>
    <property type="evidence" value="ECO:0007669"/>
    <property type="project" value="UniProtKB-KW"/>
</dbReference>
<dbReference type="GO" id="GO:0055036">
    <property type="term" value="C:virion membrane"/>
    <property type="evidence" value="ECO:0007669"/>
    <property type="project" value="UniProtKB-SubCell"/>
</dbReference>
<dbReference type="InterPro" id="IPR009236">
    <property type="entry name" value="Chordopox_A13L"/>
</dbReference>
<dbReference type="Pfam" id="PF05961">
    <property type="entry name" value="Chordopox_A13L"/>
    <property type="match status" value="1"/>
</dbReference>
<organismHost>
    <name type="scientific">Vertebrata</name>
    <dbReference type="NCBI Taxonomy" id="7742"/>
</organismHost>
<comment type="function">
    <text evidence="1">Essential for the encapsidation of DNA into immature virions (IV) and the subsequent maturation of IV into mature virions (MV).</text>
</comment>
<comment type="subcellular location">
    <subcellularLocation>
        <location evidence="1">Virion membrane</location>
        <topology evidence="1">Single-pass membrane protein</topology>
    </subcellularLocation>
    <text evidence="1">The mature virion is located in the cytoplasm of infected cells and is probably released by cell lysis.</text>
</comment>
<comment type="induction">
    <text>Expressed in the late phase of the viral replicative cycle.</text>
</comment>
<comment type="similarity">
    <text evidence="3">Belongs to the chordopoxvirinae A13 family.</text>
</comment>
<organism>
    <name type="scientific">Fowlpox virus (strain NVSL)</name>
    <name type="common">FPV</name>
    <dbReference type="NCBI Taxonomy" id="928301"/>
    <lineage>
        <taxon>Viruses</taxon>
        <taxon>Varidnaviria</taxon>
        <taxon>Bamfordvirae</taxon>
        <taxon>Nucleocytoviricota</taxon>
        <taxon>Pokkesviricetes</taxon>
        <taxon>Chitovirales</taxon>
        <taxon>Poxviridae</taxon>
        <taxon>Chordopoxvirinae</taxon>
        <taxon>Avipoxvirus</taxon>
        <taxon>Fowlpox virus</taxon>
    </lineage>
</organism>
<feature type="chain" id="PRO_0000099241" description="Virion membrane protein A13 homolog">
    <location>
        <begin position="1"/>
        <end position="71"/>
    </location>
</feature>
<feature type="transmembrane region" description="Helical" evidence="2">
    <location>
        <begin position="1"/>
        <end position="21"/>
    </location>
</feature>
<feature type="topological domain" description="Virion surface" evidence="2">
    <location>
        <begin position="22"/>
        <end position="70"/>
    </location>
</feature>
<gene>
    <name type="ordered locus">FPV178</name>
</gene>
<proteinExistence type="evidence at transcript level"/>
<evidence type="ECO:0000250" key="1"/>
<evidence type="ECO:0000255" key="2"/>
<evidence type="ECO:0000305" key="3"/>
<name>A13_FOWPN</name>
<keyword id="KW-0426">Late protein</keyword>
<keyword id="KW-0472">Membrane</keyword>
<keyword id="KW-1185">Reference proteome</keyword>
<keyword id="KW-0812">Transmembrane</keyword>
<keyword id="KW-1133">Transmembrane helix</keyword>
<keyword id="KW-0946">Virion</keyword>
<sequence>MGIIDTFVITAVTVIIFCLLIYAAYKRYKCIPSPDDRDKVLKSTLNDDTLFNQTLTPDQVKALHRLVTSSI</sequence>
<reference key="1">
    <citation type="journal article" date="2000" name="J. Virol.">
        <title>The genome of fowlpox virus.</title>
        <authorList>
            <person name="Afonso C.L."/>
            <person name="Tulman E.R."/>
            <person name="Lu Z."/>
            <person name="Zsak L."/>
            <person name="Kutish G.F."/>
            <person name="Rock D.L."/>
        </authorList>
    </citation>
    <scope>NUCLEOTIDE SEQUENCE [LARGE SCALE GENOMIC DNA]</scope>
</reference>
<accession>Q9J555</accession>